<organism>
    <name type="scientific">Clostridium perfringens (strain 13 / Type A)</name>
    <dbReference type="NCBI Taxonomy" id="195102"/>
    <lineage>
        <taxon>Bacteria</taxon>
        <taxon>Bacillati</taxon>
        <taxon>Bacillota</taxon>
        <taxon>Clostridia</taxon>
        <taxon>Eubacteriales</taxon>
        <taxon>Clostridiaceae</taxon>
        <taxon>Clostridium</taxon>
    </lineage>
</organism>
<comment type="function">
    <text evidence="1">Involved in the biosynthesis of ADP-glucose, a building block required for the elongation reactions to produce glycogen. Catalyzes the reaction between ATP and alpha-D-glucose 1-phosphate (G1P) to produce pyrophosphate and ADP-Glc.</text>
</comment>
<comment type="catalytic activity">
    <reaction evidence="1">
        <text>alpha-D-glucose 1-phosphate + ATP + H(+) = ADP-alpha-D-glucose + diphosphate</text>
        <dbReference type="Rhea" id="RHEA:12120"/>
        <dbReference type="ChEBI" id="CHEBI:15378"/>
        <dbReference type="ChEBI" id="CHEBI:30616"/>
        <dbReference type="ChEBI" id="CHEBI:33019"/>
        <dbReference type="ChEBI" id="CHEBI:57498"/>
        <dbReference type="ChEBI" id="CHEBI:58601"/>
        <dbReference type="EC" id="2.7.7.27"/>
    </reaction>
</comment>
<comment type="pathway">
    <text evidence="1">Glycan biosynthesis; glycogen biosynthesis.</text>
</comment>
<comment type="subunit">
    <text evidence="1">Homotetramer.</text>
</comment>
<comment type="similarity">
    <text evidence="1">Belongs to the bacterial/plant glucose-1-phosphate adenylyltransferase family.</text>
</comment>
<sequence length="393" mass="43889">MEGRLVSKKEIVAMILAGGQGSRLGVLTKNLAKPAVPFGGKYRIIDFPLSNCSNSGIYTVGVLTQYKPLKLNEHIGIGDTWDLDRRDGGVSILPPYQKEKGGDWYKGTANAIYQNIEFIERYDPEYVLILSGDHIYKMDYDKMLEMHKQKEADATIAVINVPMHEASRFGIMNTNEDLSIYEFEEKPEHPKSTNASMGIYIFNWKILKKFLEEDELDQSSSNDFGKNIIPKMLNSGKKLIAYPFNGYWKDVGTIESLWEANMDLLKYEDELSLYDSEWKIYSANPVRPAQFIGKDAEIKSSLTVEGCIVHGKVENSVLFQGVYVGKGAIVKDAVIMPNTKIEDNVLIEKAIIGSEAIVCKGCKIGDGNKISVIASKEVVIGSKEVIEECAMVK</sequence>
<name>GLGC_CLOPE</name>
<dbReference type="EC" id="2.7.7.27" evidence="1"/>
<dbReference type="EMBL" id="BA000016">
    <property type="protein sequence ID" value="BAB79774.1"/>
    <property type="molecule type" value="Genomic_DNA"/>
</dbReference>
<dbReference type="SMR" id="Q8XP97"/>
<dbReference type="STRING" id="195102.gene:10489304"/>
<dbReference type="KEGG" id="cpe:CPE0068"/>
<dbReference type="HOGENOM" id="CLU_029499_14_0_9"/>
<dbReference type="UniPathway" id="UPA00164"/>
<dbReference type="Proteomes" id="UP000000818">
    <property type="component" value="Chromosome"/>
</dbReference>
<dbReference type="GO" id="GO:0005524">
    <property type="term" value="F:ATP binding"/>
    <property type="evidence" value="ECO:0007669"/>
    <property type="project" value="UniProtKB-KW"/>
</dbReference>
<dbReference type="GO" id="GO:0008878">
    <property type="term" value="F:glucose-1-phosphate adenylyltransferase activity"/>
    <property type="evidence" value="ECO:0007669"/>
    <property type="project" value="UniProtKB-UniRule"/>
</dbReference>
<dbReference type="GO" id="GO:0005978">
    <property type="term" value="P:glycogen biosynthetic process"/>
    <property type="evidence" value="ECO:0007669"/>
    <property type="project" value="UniProtKB-UniRule"/>
</dbReference>
<dbReference type="CDD" id="cd02508">
    <property type="entry name" value="ADP_Glucose_PP"/>
    <property type="match status" value="1"/>
</dbReference>
<dbReference type="CDD" id="cd04651">
    <property type="entry name" value="LbH_G1P_AT_C"/>
    <property type="match status" value="1"/>
</dbReference>
<dbReference type="Gene3D" id="2.160.10.10">
    <property type="entry name" value="Hexapeptide repeat proteins"/>
    <property type="match status" value="1"/>
</dbReference>
<dbReference type="Gene3D" id="3.90.550.10">
    <property type="entry name" value="Spore Coat Polysaccharide Biosynthesis Protein SpsA, Chain A"/>
    <property type="match status" value="1"/>
</dbReference>
<dbReference type="HAMAP" id="MF_00624">
    <property type="entry name" value="GlgC"/>
    <property type="match status" value="1"/>
</dbReference>
<dbReference type="InterPro" id="IPR011831">
    <property type="entry name" value="ADP-Glc_PPase"/>
</dbReference>
<dbReference type="InterPro" id="IPR005836">
    <property type="entry name" value="ADP_Glu_pyroP_CS"/>
</dbReference>
<dbReference type="InterPro" id="IPR023049">
    <property type="entry name" value="GlgC_bac"/>
</dbReference>
<dbReference type="InterPro" id="IPR056818">
    <property type="entry name" value="GlmU/GlgC-like_hexapep"/>
</dbReference>
<dbReference type="InterPro" id="IPR005835">
    <property type="entry name" value="NTP_transferase_dom"/>
</dbReference>
<dbReference type="InterPro" id="IPR029044">
    <property type="entry name" value="Nucleotide-diphossugar_trans"/>
</dbReference>
<dbReference type="InterPro" id="IPR011004">
    <property type="entry name" value="Trimer_LpxA-like_sf"/>
</dbReference>
<dbReference type="NCBIfam" id="TIGR02091">
    <property type="entry name" value="glgC"/>
    <property type="match status" value="1"/>
</dbReference>
<dbReference type="NCBIfam" id="NF003670">
    <property type="entry name" value="PRK05293.1"/>
    <property type="match status" value="1"/>
</dbReference>
<dbReference type="PANTHER" id="PTHR43523:SF2">
    <property type="entry name" value="GLUCOSE-1-PHOSPHATE ADENYLYLTRANSFERASE"/>
    <property type="match status" value="1"/>
</dbReference>
<dbReference type="PANTHER" id="PTHR43523">
    <property type="entry name" value="GLUCOSE-1-PHOSPHATE ADENYLYLTRANSFERASE-RELATED"/>
    <property type="match status" value="1"/>
</dbReference>
<dbReference type="Pfam" id="PF24894">
    <property type="entry name" value="Hexapep_GlmU"/>
    <property type="match status" value="1"/>
</dbReference>
<dbReference type="Pfam" id="PF00483">
    <property type="entry name" value="NTP_transferase"/>
    <property type="match status" value="1"/>
</dbReference>
<dbReference type="SUPFAM" id="SSF53448">
    <property type="entry name" value="Nucleotide-diphospho-sugar transferases"/>
    <property type="match status" value="1"/>
</dbReference>
<dbReference type="SUPFAM" id="SSF51161">
    <property type="entry name" value="Trimeric LpxA-like enzymes"/>
    <property type="match status" value="1"/>
</dbReference>
<dbReference type="PROSITE" id="PS00808">
    <property type="entry name" value="ADP_GLC_PYROPHOSPH_1"/>
    <property type="match status" value="1"/>
</dbReference>
<dbReference type="PROSITE" id="PS00809">
    <property type="entry name" value="ADP_GLC_PYROPHOSPH_2"/>
    <property type="match status" value="1"/>
</dbReference>
<dbReference type="PROSITE" id="PS00810">
    <property type="entry name" value="ADP_GLC_PYROPHOSPH_3"/>
    <property type="match status" value="1"/>
</dbReference>
<gene>
    <name evidence="1" type="primary">glgC</name>
    <name type="ordered locus">CPE0068</name>
</gene>
<protein>
    <recommendedName>
        <fullName evidence="1">Glucose-1-phosphate adenylyltransferase</fullName>
        <ecNumber evidence="1">2.7.7.27</ecNumber>
    </recommendedName>
    <alternativeName>
        <fullName evidence="1">ADP-glucose pyrophosphorylase</fullName>
        <shortName evidence="1">ADPGlc PPase</shortName>
    </alternativeName>
    <alternativeName>
        <fullName evidence="1">ADP-glucose synthase</fullName>
    </alternativeName>
</protein>
<feature type="chain" id="PRO_0000195289" description="Glucose-1-phosphate adenylyltransferase">
    <location>
        <begin position="1"/>
        <end position="393"/>
    </location>
</feature>
<feature type="binding site" evidence="1">
    <location>
        <position position="105"/>
    </location>
    <ligand>
        <name>alpha-D-glucose 1-phosphate</name>
        <dbReference type="ChEBI" id="CHEBI:58601"/>
    </ligand>
</feature>
<feature type="binding site" evidence="1">
    <location>
        <position position="170"/>
    </location>
    <ligand>
        <name>alpha-D-glucose 1-phosphate</name>
        <dbReference type="ChEBI" id="CHEBI:58601"/>
    </ligand>
</feature>
<feature type="binding site" evidence="1">
    <location>
        <begin position="185"/>
        <end position="186"/>
    </location>
    <ligand>
        <name>alpha-D-glucose 1-phosphate</name>
        <dbReference type="ChEBI" id="CHEBI:58601"/>
    </ligand>
</feature>
<feature type="binding site" evidence="1">
    <location>
        <position position="196"/>
    </location>
    <ligand>
        <name>alpha-D-glucose 1-phosphate</name>
        <dbReference type="ChEBI" id="CHEBI:58601"/>
    </ligand>
</feature>
<keyword id="KW-0067">ATP-binding</keyword>
<keyword id="KW-0119">Carbohydrate metabolism</keyword>
<keyword id="KW-0320">Glycogen biosynthesis</keyword>
<keyword id="KW-0321">Glycogen metabolism</keyword>
<keyword id="KW-0547">Nucleotide-binding</keyword>
<keyword id="KW-0548">Nucleotidyltransferase</keyword>
<keyword id="KW-1185">Reference proteome</keyword>
<keyword id="KW-0808">Transferase</keyword>
<reference key="1">
    <citation type="journal article" date="2002" name="Proc. Natl. Acad. Sci. U.S.A.">
        <title>Complete genome sequence of Clostridium perfringens, an anaerobic flesh-eater.</title>
        <authorList>
            <person name="Shimizu T."/>
            <person name="Ohtani K."/>
            <person name="Hirakawa H."/>
            <person name="Ohshima K."/>
            <person name="Yamashita A."/>
            <person name="Shiba T."/>
            <person name="Ogasawara N."/>
            <person name="Hattori M."/>
            <person name="Kuhara S."/>
            <person name="Hayashi H."/>
        </authorList>
    </citation>
    <scope>NUCLEOTIDE SEQUENCE [LARGE SCALE GENOMIC DNA]</scope>
    <source>
        <strain>13 / Type A</strain>
    </source>
</reference>
<accession>Q8XP97</accession>
<proteinExistence type="inferred from homology"/>
<evidence type="ECO:0000255" key="1">
    <source>
        <dbReference type="HAMAP-Rule" id="MF_00624"/>
    </source>
</evidence>